<feature type="chain" id="PRO_0000232848" description="NADH-ubiquinone oxidoreductase chain 2">
    <location>
        <begin position="1"/>
        <end position="347"/>
    </location>
</feature>
<feature type="transmembrane region" description="Helical" evidence="3">
    <location>
        <begin position="3"/>
        <end position="23"/>
    </location>
</feature>
<feature type="transmembrane region" description="Helical" evidence="3">
    <location>
        <begin position="59"/>
        <end position="79"/>
    </location>
</feature>
<feature type="transmembrane region" description="Helical" evidence="3">
    <location>
        <begin position="93"/>
        <end position="115"/>
    </location>
</feature>
<feature type="transmembrane region" description="Helical" evidence="3">
    <location>
        <begin position="150"/>
        <end position="170"/>
    </location>
</feature>
<feature type="transmembrane region" description="Helical" evidence="3">
    <location>
        <begin position="178"/>
        <end position="198"/>
    </location>
</feature>
<feature type="transmembrane region" description="Helical" evidence="3">
    <location>
        <begin position="200"/>
        <end position="220"/>
    </location>
</feature>
<feature type="transmembrane region" description="Helical" evidence="3">
    <location>
        <begin position="240"/>
        <end position="260"/>
    </location>
</feature>
<feature type="transmembrane region" description="Helical" evidence="3">
    <location>
        <begin position="274"/>
        <end position="294"/>
    </location>
</feature>
<feature type="transmembrane region" description="Helical" evidence="3">
    <location>
        <begin position="326"/>
        <end position="346"/>
    </location>
</feature>
<reference key="1">
    <citation type="journal article" date="2006" name="PLoS Biol.">
        <title>Complete mitochondrial genome and phylogeny of Pleistocene mammoth Mammuthus primigenius.</title>
        <authorList>
            <person name="Rogaev E.I."/>
            <person name="Moliaka Y.K."/>
            <person name="Malyarchuk B.A."/>
            <person name="Kondrashov F.A."/>
            <person name="Derenko M.V."/>
            <person name="Chumakov I."/>
            <person name="Grigorenko A.P."/>
        </authorList>
    </citation>
    <scope>NUCLEOTIDE SEQUENCE [GENOMIC DNA]</scope>
    <source>
        <tissue>Blood</tissue>
    </source>
</reference>
<evidence type="ECO:0000250" key="1">
    <source>
        <dbReference type="UniProtKB" id="P03891"/>
    </source>
</evidence>
<evidence type="ECO:0000250" key="2">
    <source>
        <dbReference type="UniProtKB" id="P03892"/>
    </source>
</evidence>
<evidence type="ECO:0000255" key="3"/>
<evidence type="ECO:0000305" key="4"/>
<protein>
    <recommendedName>
        <fullName evidence="1">NADH-ubiquinone oxidoreductase chain 2</fullName>
        <ecNumber evidence="1">7.1.1.2</ecNumber>
    </recommendedName>
    <alternativeName>
        <fullName>NADH dehydrogenase subunit 2</fullName>
    </alternativeName>
</protein>
<comment type="function">
    <text evidence="1">Core subunit of the mitochondrial membrane respiratory chain NADH dehydrogenase (Complex I) which catalyzes electron transfer from NADH through the respiratory chain, using ubiquinone as an electron acceptor. Essential for the catalytic activity and assembly of complex I.</text>
</comment>
<comment type="catalytic activity">
    <reaction evidence="1">
        <text>a ubiquinone + NADH + 5 H(+)(in) = a ubiquinol + NAD(+) + 4 H(+)(out)</text>
        <dbReference type="Rhea" id="RHEA:29091"/>
        <dbReference type="Rhea" id="RHEA-COMP:9565"/>
        <dbReference type="Rhea" id="RHEA-COMP:9566"/>
        <dbReference type="ChEBI" id="CHEBI:15378"/>
        <dbReference type="ChEBI" id="CHEBI:16389"/>
        <dbReference type="ChEBI" id="CHEBI:17976"/>
        <dbReference type="ChEBI" id="CHEBI:57540"/>
        <dbReference type="ChEBI" id="CHEBI:57945"/>
        <dbReference type="EC" id="7.1.1.2"/>
    </reaction>
</comment>
<comment type="subunit">
    <text evidence="1 2">Core subunit of respiratory chain NADH dehydrogenase (Complex I) which is composed of 45 different subunits. Interacts with TMEM242 (By similarity).</text>
</comment>
<comment type="subcellular location">
    <subcellularLocation>
        <location evidence="2">Mitochondrion inner membrane</location>
        <topology evidence="3">Multi-pass membrane protein</topology>
    </subcellularLocation>
</comment>
<comment type="similarity">
    <text evidence="4">Belongs to the complex I subunit 2 family.</text>
</comment>
<geneLocation type="mitochondrion"/>
<gene>
    <name evidence="1" type="primary">MT-ND2</name>
    <name type="synonym">MTND2</name>
    <name type="synonym">NADH2</name>
    <name type="synonym">ND2</name>
</gene>
<dbReference type="EC" id="7.1.1.2" evidence="1"/>
<dbReference type="EMBL" id="DQ316068">
    <property type="protein sequence ID" value="ABC17892.1"/>
    <property type="molecule type" value="Genomic_DNA"/>
</dbReference>
<dbReference type="RefSeq" id="YP_626368.1">
    <property type="nucleotide sequence ID" value="NC_005129.2"/>
</dbReference>
<dbReference type="SMR" id="Q2I3H3"/>
<dbReference type="GeneID" id="2610368"/>
<dbReference type="CTD" id="4536"/>
<dbReference type="GO" id="GO:0005743">
    <property type="term" value="C:mitochondrial inner membrane"/>
    <property type="evidence" value="ECO:0000250"/>
    <property type="project" value="UniProtKB"/>
</dbReference>
<dbReference type="GO" id="GO:0008137">
    <property type="term" value="F:NADH dehydrogenase (ubiquinone) activity"/>
    <property type="evidence" value="ECO:0000250"/>
    <property type="project" value="UniProtKB"/>
</dbReference>
<dbReference type="GO" id="GO:0006120">
    <property type="term" value="P:mitochondrial electron transport, NADH to ubiquinone"/>
    <property type="evidence" value="ECO:0000250"/>
    <property type="project" value="UniProtKB"/>
</dbReference>
<dbReference type="GO" id="GO:0032981">
    <property type="term" value="P:mitochondrial respiratory chain complex I assembly"/>
    <property type="evidence" value="ECO:0000250"/>
    <property type="project" value="UniProtKB"/>
</dbReference>
<dbReference type="InterPro" id="IPR050175">
    <property type="entry name" value="Complex_I_Subunit_2"/>
</dbReference>
<dbReference type="InterPro" id="IPR010933">
    <property type="entry name" value="NADH_DH_su2_C"/>
</dbReference>
<dbReference type="InterPro" id="IPR003917">
    <property type="entry name" value="NADH_UbQ_OxRdtase_chain2"/>
</dbReference>
<dbReference type="InterPro" id="IPR001750">
    <property type="entry name" value="ND/Mrp_TM"/>
</dbReference>
<dbReference type="PANTHER" id="PTHR46552">
    <property type="entry name" value="NADH-UBIQUINONE OXIDOREDUCTASE CHAIN 2"/>
    <property type="match status" value="1"/>
</dbReference>
<dbReference type="PANTHER" id="PTHR46552:SF1">
    <property type="entry name" value="NADH-UBIQUINONE OXIDOREDUCTASE CHAIN 2"/>
    <property type="match status" value="1"/>
</dbReference>
<dbReference type="Pfam" id="PF06444">
    <property type="entry name" value="NADH_dehy_S2_C"/>
    <property type="match status" value="1"/>
</dbReference>
<dbReference type="Pfam" id="PF00361">
    <property type="entry name" value="Proton_antipo_M"/>
    <property type="match status" value="1"/>
</dbReference>
<dbReference type="PRINTS" id="PR01436">
    <property type="entry name" value="NADHDHGNASE2"/>
</dbReference>
<sequence length="347" mass="38988">MNPLALSLILTTLFTGTLITMMSSHWLTAWMGLEMNMLTMIPILMKTTNPRSTEAATKYFMTQATASMMLMMALTINLMYSGQWSITKMTNPVASNVALMALMTKLGSAPFHFWVPEVTQGVELTPGMILLTWQKLAPLSLLYQMATYTNTNLIYLSGLLSILIGGWGGLNQTQLRKILAYSSISHMGWMLIILPFNPTLTLLNLAIYILLTLSIFMILANTFTTSMSSLTLMWNKTPAMTIMLMTTLLSLGGLPPLSGFTPKWLMIHELTKNNSIIMPLTMAIMTLLNMYFYTRLIYYSSLTILPSTNNMKMTWQFTNTKHTMMLPTLITLSNMLLPLTPMISMLE</sequence>
<keyword id="KW-0249">Electron transport</keyword>
<keyword id="KW-0472">Membrane</keyword>
<keyword id="KW-0496">Mitochondrion</keyword>
<keyword id="KW-0999">Mitochondrion inner membrane</keyword>
<keyword id="KW-0520">NAD</keyword>
<keyword id="KW-0679">Respiratory chain</keyword>
<keyword id="KW-1278">Translocase</keyword>
<keyword id="KW-0812">Transmembrane</keyword>
<keyword id="KW-1133">Transmembrane helix</keyword>
<keyword id="KW-0813">Transport</keyword>
<keyword id="KW-0830">Ubiquinone</keyword>
<proteinExistence type="inferred from homology"/>
<organism>
    <name type="scientific">Elephas maximus</name>
    <name type="common">Indian elephant</name>
    <dbReference type="NCBI Taxonomy" id="9783"/>
    <lineage>
        <taxon>Eukaryota</taxon>
        <taxon>Metazoa</taxon>
        <taxon>Chordata</taxon>
        <taxon>Craniata</taxon>
        <taxon>Vertebrata</taxon>
        <taxon>Euteleostomi</taxon>
        <taxon>Mammalia</taxon>
        <taxon>Eutheria</taxon>
        <taxon>Afrotheria</taxon>
        <taxon>Proboscidea</taxon>
        <taxon>Elephantidae</taxon>
        <taxon>Elephas</taxon>
    </lineage>
</organism>
<name>NU2M_ELEMA</name>
<accession>Q2I3H3</accession>